<name>3NO24_OPHHA</name>
<comment type="function">
    <text evidence="2">Binds with low affinity to muscular (alpha-1-beta-1-delta-epsilon/CHRNA1-CHRNB1-CHRND-CHRNE) and very low affinity to neuronal (alpha-7/CHRNA7) nicotinic acetylcholine receptor (nAChR).</text>
</comment>
<comment type="subcellular location">
    <subcellularLocation>
        <location evidence="4">Secreted</location>
    </subcellularLocation>
</comment>
<comment type="tissue specificity">
    <text evidence="5">Expressed by the venom gland.</text>
</comment>
<comment type="similarity">
    <text evidence="5">Belongs to the three-finger toxin family. Ancestral subfamily. Orphan group II sub-subfamily.</text>
</comment>
<organism>
    <name type="scientific">Ophiophagus hannah</name>
    <name type="common">King cobra</name>
    <name type="synonym">Naja hannah</name>
    <dbReference type="NCBI Taxonomy" id="8665"/>
    <lineage>
        <taxon>Eukaryota</taxon>
        <taxon>Metazoa</taxon>
        <taxon>Chordata</taxon>
        <taxon>Craniata</taxon>
        <taxon>Vertebrata</taxon>
        <taxon>Euteleostomi</taxon>
        <taxon>Lepidosauria</taxon>
        <taxon>Squamata</taxon>
        <taxon>Bifurcata</taxon>
        <taxon>Unidentata</taxon>
        <taxon>Episquamata</taxon>
        <taxon>Toxicofera</taxon>
        <taxon>Serpentes</taxon>
        <taxon>Colubroidea</taxon>
        <taxon>Elapidae</taxon>
        <taxon>Elapinae</taxon>
        <taxon>Ophiophagus</taxon>
    </lineage>
</organism>
<proteinExistence type="evidence at protein level"/>
<accession>Q2VBN2</accession>
<keyword id="KW-0008">Acetylcholine receptor inhibiting toxin</keyword>
<keyword id="KW-1015">Disulfide bond</keyword>
<keyword id="KW-0872">Ion channel impairing toxin</keyword>
<keyword id="KW-0528">Neurotoxin</keyword>
<keyword id="KW-0629">Postsynaptic neurotoxin</keyword>
<keyword id="KW-0964">Secreted</keyword>
<keyword id="KW-0732">Signal</keyword>
<keyword id="KW-0800">Toxin</keyword>
<protein>
    <recommendedName>
        <fullName>Weak neurotoxin WNTX34</fullName>
    </recommendedName>
</protein>
<reference key="1">
    <citation type="journal article" date="2006" name="Biochem. J.">
        <title>Novel genes encoding six kinds of three-finger toxins in Ophiophagus hannah (king cobra) and function characterization of two recombinant long-chain neurotoxins.</title>
        <authorList>
            <person name="Li J."/>
            <person name="Zhang H."/>
            <person name="Liu J."/>
            <person name="Xu K."/>
        </authorList>
    </citation>
    <scope>NUCLEOTIDE SEQUENCE [MRNA]</scope>
    <source>
        <tissue>Venom gland</tissue>
    </source>
</reference>
<reference key="2">
    <citation type="journal article" date="2013" name="Proc. Natl. Acad. Sci. U.S.A.">
        <title>The king cobra genome reveals dynamic gene evolution and adaptation in the snake venom system.</title>
        <authorList>
            <person name="Vonk F.J."/>
            <person name="Casewell N.R."/>
            <person name="Henkel C.V."/>
            <person name="Heimberg A.M."/>
            <person name="Jansen H.J."/>
            <person name="McCleary R.J."/>
            <person name="Kerkkamp H.M."/>
            <person name="Vos R.A."/>
            <person name="Guerreiro I."/>
            <person name="Calvete J.J."/>
            <person name="Wuster W."/>
            <person name="Woods A.E."/>
            <person name="Logan J.M."/>
            <person name="Harrison R.A."/>
            <person name="Castoe T.A."/>
            <person name="de Koning A.P."/>
            <person name="Pollock D.D."/>
            <person name="Yandell M."/>
            <person name="Calderon D."/>
            <person name="Renjifo C."/>
            <person name="Currier R.B."/>
            <person name="Salgado D."/>
            <person name="Pla D."/>
            <person name="Sanz L."/>
            <person name="Hyder A.S."/>
            <person name="Ribeiro J.M."/>
            <person name="Arntzen J.W."/>
            <person name="van den Thillart G.E."/>
            <person name="Boetzer M."/>
            <person name="Pirovano W."/>
            <person name="Dirks R.P."/>
            <person name="Spaink H.P."/>
            <person name="Duboule D."/>
            <person name="McGlinn E."/>
            <person name="Kini R.M."/>
            <person name="Richardson M.K."/>
        </authorList>
    </citation>
    <scope>IDENTIFICATION BY MASS SPECTROMETRY</scope>
    <scope>SUBCELLULAR LOCATION</scope>
    <source>
        <tissue>Venom</tissue>
    </source>
</reference>
<dbReference type="EMBL" id="DQ273583">
    <property type="protein sequence ID" value="ABB83637.1"/>
    <property type="molecule type" value="mRNA"/>
</dbReference>
<dbReference type="SMR" id="Q2VBN2"/>
<dbReference type="GO" id="GO:0005576">
    <property type="term" value="C:extracellular region"/>
    <property type="evidence" value="ECO:0007669"/>
    <property type="project" value="UniProtKB-SubCell"/>
</dbReference>
<dbReference type="GO" id="GO:0030550">
    <property type="term" value="F:acetylcholine receptor inhibitor activity"/>
    <property type="evidence" value="ECO:0007669"/>
    <property type="project" value="UniProtKB-KW"/>
</dbReference>
<dbReference type="GO" id="GO:0099106">
    <property type="term" value="F:ion channel regulator activity"/>
    <property type="evidence" value="ECO:0007669"/>
    <property type="project" value="UniProtKB-KW"/>
</dbReference>
<dbReference type="GO" id="GO:0090729">
    <property type="term" value="F:toxin activity"/>
    <property type="evidence" value="ECO:0007669"/>
    <property type="project" value="UniProtKB-KW"/>
</dbReference>
<dbReference type="CDD" id="cd00206">
    <property type="entry name" value="TFP_snake_toxin"/>
    <property type="match status" value="1"/>
</dbReference>
<dbReference type="FunFam" id="2.10.60.10:FF:000024">
    <property type="entry name" value="Cytotoxin 1"/>
    <property type="match status" value="1"/>
</dbReference>
<dbReference type="Gene3D" id="2.10.60.10">
    <property type="entry name" value="CD59"/>
    <property type="match status" value="1"/>
</dbReference>
<dbReference type="InterPro" id="IPR003571">
    <property type="entry name" value="Snake_3FTx"/>
</dbReference>
<dbReference type="InterPro" id="IPR045860">
    <property type="entry name" value="Snake_toxin-like_sf"/>
</dbReference>
<dbReference type="InterPro" id="IPR018354">
    <property type="entry name" value="Snake_toxin_con_site"/>
</dbReference>
<dbReference type="InterPro" id="IPR054131">
    <property type="entry name" value="Toxin_cobra-type"/>
</dbReference>
<dbReference type="Pfam" id="PF21947">
    <property type="entry name" value="Toxin_cobra-type"/>
    <property type="match status" value="1"/>
</dbReference>
<dbReference type="SUPFAM" id="SSF57302">
    <property type="entry name" value="Snake toxin-like"/>
    <property type="match status" value="1"/>
</dbReference>
<dbReference type="PROSITE" id="PS00272">
    <property type="entry name" value="SNAKE_TOXIN"/>
    <property type="match status" value="1"/>
</dbReference>
<feature type="signal peptide" evidence="1">
    <location>
        <begin position="1"/>
        <end position="21"/>
    </location>
</feature>
<feature type="chain" id="PRO_5000006493" description="Weak neurotoxin WNTX34">
    <location>
        <begin position="22"/>
        <end position="86"/>
    </location>
</feature>
<feature type="disulfide bond" evidence="3">
    <location>
        <begin position="24"/>
        <end position="45"/>
    </location>
</feature>
<feature type="disulfide bond" evidence="3">
    <location>
        <begin position="27"/>
        <end position="32"/>
    </location>
</feature>
<feature type="disulfide bond" evidence="3">
    <location>
        <begin position="38"/>
        <end position="63"/>
    </location>
</feature>
<feature type="disulfide bond" evidence="3">
    <location>
        <begin position="67"/>
        <end position="78"/>
    </location>
</feature>
<feature type="disulfide bond" evidence="3">
    <location>
        <begin position="79"/>
        <end position="84"/>
    </location>
</feature>
<sequence>MKTLLLTLVVVTIVCLDLGYSLTCLNCPEQYCKRIHTCRNGENVCFKRFYEGKLLCKQFRRGCAATCPEAKSREIVQCCSTDECNH</sequence>
<evidence type="ECO:0000250" key="1"/>
<evidence type="ECO:0000250" key="2">
    <source>
        <dbReference type="UniProtKB" id="O42255"/>
    </source>
</evidence>
<evidence type="ECO:0000250" key="3">
    <source>
        <dbReference type="UniProtKB" id="Q8AY51"/>
    </source>
</evidence>
<evidence type="ECO:0000269" key="4">
    <source>
    </source>
</evidence>
<evidence type="ECO:0000305" key="5"/>